<name>060L_IIV6</name>
<keyword id="KW-0472">Membrane</keyword>
<keyword id="KW-1185">Reference proteome</keyword>
<keyword id="KW-0812">Transmembrane</keyword>
<keyword id="KW-1133">Transmembrane helix</keyword>
<organismHost>
    <name type="scientific">Acheta domesticus</name>
    <name type="common">House cricket</name>
    <dbReference type="NCBI Taxonomy" id="6997"/>
</organismHost>
<organismHost>
    <name type="scientific">Chilo suppressalis</name>
    <name type="common">Asiatic rice borer moth</name>
    <dbReference type="NCBI Taxonomy" id="168631"/>
</organismHost>
<organismHost>
    <name type="scientific">Gryllus bimaculatus</name>
    <name type="common">Two-spotted cricket</name>
    <dbReference type="NCBI Taxonomy" id="6999"/>
</organismHost>
<organismHost>
    <name type="scientific">Gryllus campestris</name>
    <dbReference type="NCBI Taxonomy" id="58607"/>
</organismHost>
<organismHost>
    <name type="scientific">Spodoptera frugiperda</name>
    <name type="common">Fall armyworm</name>
    <dbReference type="NCBI Taxonomy" id="7108"/>
</organismHost>
<organism>
    <name type="scientific">Invertebrate iridescent virus 6</name>
    <name type="common">IIV-6</name>
    <name type="synonym">Chilo iridescent virus</name>
    <dbReference type="NCBI Taxonomy" id="176652"/>
    <lineage>
        <taxon>Viruses</taxon>
        <taxon>Varidnaviria</taxon>
        <taxon>Bamfordvirae</taxon>
        <taxon>Nucleocytoviricota</taxon>
        <taxon>Megaviricetes</taxon>
        <taxon>Pimascovirales</taxon>
        <taxon>Iridoviridae</taxon>
        <taxon>Betairidovirinae</taxon>
        <taxon>Iridovirus</taxon>
    </lineage>
</organism>
<accession>O55704</accession>
<gene>
    <name type="ORF">IIV6-060L</name>
</gene>
<dbReference type="EMBL" id="AF303741">
    <property type="protein sequence ID" value="AAB94415.1"/>
    <property type="molecule type" value="Genomic_DNA"/>
</dbReference>
<dbReference type="PIR" id="T03041">
    <property type="entry name" value="T03041"/>
</dbReference>
<dbReference type="RefSeq" id="NP_149523.1">
    <property type="nucleotide sequence ID" value="NC_003038.1"/>
</dbReference>
<dbReference type="SMR" id="O55704"/>
<dbReference type="KEGG" id="vg:1733027"/>
<dbReference type="Proteomes" id="UP000001359">
    <property type="component" value="Genome"/>
</dbReference>
<dbReference type="GO" id="GO:0016020">
    <property type="term" value="C:membrane"/>
    <property type="evidence" value="ECO:0007669"/>
    <property type="project" value="UniProtKB-SubCell"/>
</dbReference>
<sequence>MSKNKSPLLNESEKMMSEMLPMKVSQSKLNYEEKVYIPTTIRNRKQHCFRRFFPYIALFQIIMLIILLILYFCFPNLFYSTNFNTNFNTSLLQNNSIETKLNSIPPQNNSQKTEVPIILNYTTQKTEVTEPIIINNTTEEIETQTIMIPKSTDQTQTIISAKTTAIISPPETSETIAQVLKNSDKREHDDEELSFTTEMETITTETETSSTIPHLRSLPIKSESSMETTSEETDEE</sequence>
<reference key="1">
    <citation type="journal article" date="2001" name="Virology">
        <title>Analysis of the first complete DNA sequence of an invertebrate iridovirus: coding strategy of the genome of Chilo iridescent virus.</title>
        <authorList>
            <person name="Jakob N.J."/>
            <person name="Mueller K."/>
            <person name="Bahr U."/>
            <person name="Darai G."/>
        </authorList>
    </citation>
    <scope>NUCLEOTIDE SEQUENCE [LARGE SCALE GENOMIC DNA]</scope>
</reference>
<reference key="2">
    <citation type="journal article" date="2007" name="Virol. J.">
        <title>Comparative genomic analysis of the family Iridoviridae: re-annotating and defining the core set of iridovirus genes.</title>
        <authorList>
            <person name="Eaton H.E."/>
            <person name="Metcalf J."/>
            <person name="Penny E."/>
            <person name="Tcherepanov V."/>
            <person name="Upton C."/>
            <person name="Brunetti C.R."/>
        </authorList>
    </citation>
    <scope>GENOME REANNOTATION</scope>
</reference>
<protein>
    <recommendedName>
        <fullName>Uncharacterized protein 060L</fullName>
    </recommendedName>
</protein>
<proteinExistence type="predicted"/>
<evidence type="ECO:0000255" key="1"/>
<evidence type="ECO:0000256" key="2">
    <source>
        <dbReference type="SAM" id="MobiDB-lite"/>
    </source>
</evidence>
<evidence type="ECO:0000305" key="3"/>
<feature type="chain" id="PRO_0000377973" description="Uncharacterized protein 060L">
    <location>
        <begin position="1"/>
        <end position="236"/>
    </location>
</feature>
<feature type="transmembrane region" description="Helical" evidence="1">
    <location>
        <begin position="52"/>
        <end position="72"/>
    </location>
</feature>
<feature type="region of interest" description="Disordered" evidence="2">
    <location>
        <begin position="183"/>
        <end position="236"/>
    </location>
</feature>
<feature type="compositionally biased region" description="Low complexity" evidence="2">
    <location>
        <begin position="196"/>
        <end position="212"/>
    </location>
</feature>
<comment type="subcellular location">
    <subcellularLocation>
        <location evidence="3">Membrane</location>
        <topology evidence="3">Single-pass membrane protein</topology>
    </subcellularLocation>
</comment>